<protein>
    <recommendedName>
        <fullName>Globin</fullName>
    </recommendedName>
    <alternativeName>
        <fullName>Myoglobin</fullName>
    </alternativeName>
</protein>
<reference key="1">
    <citation type="submission" date="1998-08" db="EMBL/GenBank/DDBJ databases">
        <authorList>
            <person name="Yuasa H.J."/>
            <person name="Matsuoka A."/>
            <person name="Tajima G."/>
        </authorList>
    </citation>
    <scope>NUCLEOTIDE SEQUENCE [MRNA]</scope>
</reference>
<reference key="2">
    <citation type="journal article" date="1981" name="Biochim. Biophys. Acta">
        <title>Amino acid sequence of myoglobin from Aplysia kurodai.</title>
        <authorList>
            <person name="Suzuki T."/>
            <person name="Takagi T."/>
            <person name="Shikama K."/>
        </authorList>
    </citation>
    <scope>PROTEIN SEQUENCE OF 2-145</scope>
    <scope>ACETYLATION AT SER-2</scope>
</reference>
<reference key="3">
    <citation type="journal article" date="1992" name="Biochim. Biophys. Acta">
        <title>Stability properties of Aplysia oxymyoglobin: effect of esterification of the heme propionates.</title>
        <authorList>
            <person name="Matsuoka A."/>
            <person name="Shikama K."/>
        </authorList>
    </citation>
    <scope>STABILITY</scope>
</reference>
<dbReference type="EMBL" id="AB003278">
    <property type="protein sequence ID" value="BAA32240.1"/>
    <property type="molecule type" value="mRNA"/>
</dbReference>
<dbReference type="PIR" id="A02532">
    <property type="entry name" value="GGGA2A"/>
</dbReference>
<dbReference type="SMR" id="P02211"/>
<dbReference type="iPTMnet" id="P02211"/>
<dbReference type="GO" id="GO:0005576">
    <property type="term" value="C:extracellular region"/>
    <property type="evidence" value="ECO:0007669"/>
    <property type="project" value="InterPro"/>
</dbReference>
<dbReference type="GO" id="GO:0005833">
    <property type="term" value="C:hemoglobin complex"/>
    <property type="evidence" value="ECO:0007669"/>
    <property type="project" value="InterPro"/>
</dbReference>
<dbReference type="GO" id="GO:0020037">
    <property type="term" value="F:heme binding"/>
    <property type="evidence" value="ECO:0007669"/>
    <property type="project" value="InterPro"/>
</dbReference>
<dbReference type="GO" id="GO:0005506">
    <property type="term" value="F:iron ion binding"/>
    <property type="evidence" value="ECO:0007669"/>
    <property type="project" value="InterPro"/>
</dbReference>
<dbReference type="GO" id="GO:0016491">
    <property type="term" value="F:oxidoreductase activity"/>
    <property type="evidence" value="ECO:0007669"/>
    <property type="project" value="UniProtKB-ARBA"/>
</dbReference>
<dbReference type="GO" id="GO:0019825">
    <property type="term" value="F:oxygen binding"/>
    <property type="evidence" value="ECO:0007669"/>
    <property type="project" value="InterPro"/>
</dbReference>
<dbReference type="GO" id="GO:0005344">
    <property type="term" value="F:oxygen carrier activity"/>
    <property type="evidence" value="ECO:0007669"/>
    <property type="project" value="UniProtKB-KW"/>
</dbReference>
<dbReference type="CDD" id="cd01040">
    <property type="entry name" value="Mb-like"/>
    <property type="match status" value="1"/>
</dbReference>
<dbReference type="Gene3D" id="1.10.490.10">
    <property type="entry name" value="Globins"/>
    <property type="match status" value="1"/>
</dbReference>
<dbReference type="InterPro" id="IPR002336">
    <property type="entry name" value="Erythrocruorin"/>
</dbReference>
<dbReference type="InterPro" id="IPR000971">
    <property type="entry name" value="Globin"/>
</dbReference>
<dbReference type="InterPro" id="IPR009050">
    <property type="entry name" value="Globin-like_sf"/>
</dbReference>
<dbReference type="InterPro" id="IPR012292">
    <property type="entry name" value="Globin/Proto"/>
</dbReference>
<dbReference type="InterPro" id="IPR013314">
    <property type="entry name" value="Globin_lamprey/hagfish"/>
</dbReference>
<dbReference type="InterPro" id="IPR044399">
    <property type="entry name" value="Mb-like_M"/>
</dbReference>
<dbReference type="PANTHER" id="PTHR46783">
    <property type="entry name" value="CYTOGLOBIN"/>
    <property type="match status" value="1"/>
</dbReference>
<dbReference type="PANTHER" id="PTHR46783:SF3">
    <property type="entry name" value="GLOBIN FAMILY PROFILE DOMAIN-CONTAINING PROTEIN"/>
    <property type="match status" value="1"/>
</dbReference>
<dbReference type="Pfam" id="PF00042">
    <property type="entry name" value="Globin"/>
    <property type="match status" value="1"/>
</dbReference>
<dbReference type="PRINTS" id="PR00611">
    <property type="entry name" value="ERYTHCRUORIN"/>
</dbReference>
<dbReference type="SUPFAM" id="SSF46458">
    <property type="entry name" value="Globin-like"/>
    <property type="match status" value="1"/>
</dbReference>
<dbReference type="PROSITE" id="PS01033">
    <property type="entry name" value="GLOBIN"/>
    <property type="match status" value="1"/>
</dbReference>
<comment type="subunit">
    <text>Monomer.</text>
</comment>
<comment type="miscellaneous">
    <text>This molluscan globin lacks one of the heme-binding histidine residues found in most other globins.</text>
</comment>
<comment type="similarity">
    <text evidence="1">Belongs to the globin family.</text>
</comment>
<organism>
    <name type="scientific">Aplysia kurodai</name>
    <name type="common">Kuroda's sea hare</name>
    <dbReference type="NCBI Taxonomy" id="6501"/>
    <lineage>
        <taxon>Eukaryota</taxon>
        <taxon>Metazoa</taxon>
        <taxon>Spiralia</taxon>
        <taxon>Lophotrochozoa</taxon>
        <taxon>Mollusca</taxon>
        <taxon>Gastropoda</taxon>
        <taxon>Heterobranchia</taxon>
        <taxon>Euthyneura</taxon>
        <taxon>Tectipleura</taxon>
        <taxon>Aplysiida</taxon>
        <taxon>Aplysioidea</taxon>
        <taxon>Aplysiidae</taxon>
        <taxon>Aplysia</taxon>
    </lineage>
</organism>
<proteinExistence type="evidence at protein level"/>
<feature type="initiator methionine" description="Removed" evidence="2">
    <location>
        <position position="1"/>
    </location>
</feature>
<feature type="chain" id="PRO_0000052472" description="Globin">
    <location>
        <begin position="2"/>
        <end position="145"/>
    </location>
</feature>
<feature type="domain" description="Globin" evidence="1">
    <location>
        <begin position="2"/>
        <end position="145"/>
    </location>
</feature>
<feature type="binding site" description="proximal binding residue" evidence="1">
    <location>
        <position position="96"/>
    </location>
    <ligand>
        <name>heme b</name>
        <dbReference type="ChEBI" id="CHEBI:60344"/>
    </ligand>
    <ligandPart>
        <name>Fe</name>
        <dbReference type="ChEBI" id="CHEBI:18248"/>
    </ligandPart>
</feature>
<feature type="modified residue" description="N-acetylserine" evidence="2">
    <location>
        <position position="2"/>
    </location>
</feature>
<feature type="sequence conflict" description="In Ref. 2; AA sequence." evidence="3" ref="2">
    <original>N</original>
    <variation>D</variation>
    <location>
        <position position="25"/>
    </location>
</feature>
<feature type="sequence conflict" description="In Ref. 2; AA sequence." evidence="3" ref="2">
    <original>DA</original>
    <variation>AN</variation>
    <location>
        <begin position="27"/>
        <end position="28"/>
    </location>
</feature>
<name>GLB_APLKU</name>
<accession>P02211</accession>
<accession>O01417</accession>
<sequence length="145" mass="15460">MSLSAAEADLVGKSWAPVYANKDANGDAFLLSLFEKFPNNANYFADFKGKSIADIKASPKLRDVSSRIFTRLNEFVNNAADAGKMSAMLSQFASEHVGFGVGSAQFENVRSMFPAFVASLSAPPADDAWNKLFGLIVAALKAAGK</sequence>
<evidence type="ECO:0000255" key="1">
    <source>
        <dbReference type="PROSITE-ProRule" id="PRU00238"/>
    </source>
</evidence>
<evidence type="ECO:0000269" key="2">
    <source>
    </source>
</evidence>
<evidence type="ECO:0000305" key="3"/>
<keyword id="KW-0007">Acetylation</keyword>
<keyword id="KW-0903">Direct protein sequencing</keyword>
<keyword id="KW-0349">Heme</keyword>
<keyword id="KW-0408">Iron</keyword>
<keyword id="KW-0479">Metal-binding</keyword>
<keyword id="KW-0514">Muscle protein</keyword>
<keyword id="KW-0561">Oxygen transport</keyword>
<keyword id="KW-0813">Transport</keyword>